<name>GLGC_FRATF</name>
<protein>
    <recommendedName>
        <fullName evidence="1">Glucose-1-phosphate adenylyltransferase</fullName>
        <ecNumber evidence="1">2.7.7.27</ecNumber>
    </recommendedName>
    <alternativeName>
        <fullName evidence="1">ADP-glucose pyrophosphorylase</fullName>
        <shortName evidence="1">ADPGlc PPase</shortName>
    </alternativeName>
    <alternativeName>
        <fullName evidence="1">ADP-glucose synthase</fullName>
    </alternativeName>
</protein>
<accession>A7NAI4</accession>
<keyword id="KW-0067">ATP-binding</keyword>
<keyword id="KW-0119">Carbohydrate metabolism</keyword>
<keyword id="KW-0320">Glycogen biosynthesis</keyword>
<keyword id="KW-0321">Glycogen metabolism</keyword>
<keyword id="KW-0547">Nucleotide-binding</keyword>
<keyword id="KW-0548">Nucleotidyltransferase</keyword>
<keyword id="KW-0808">Transferase</keyword>
<proteinExistence type="inferred from homology"/>
<feature type="chain" id="PRO_1000051566" description="Glucose-1-phosphate adenylyltransferase">
    <location>
        <begin position="1"/>
        <end position="423"/>
    </location>
</feature>
<feature type="binding site" evidence="1">
    <location>
        <position position="108"/>
    </location>
    <ligand>
        <name>alpha-D-glucose 1-phosphate</name>
        <dbReference type="ChEBI" id="CHEBI:58601"/>
    </ligand>
</feature>
<feature type="binding site" evidence="1">
    <location>
        <position position="173"/>
    </location>
    <ligand>
        <name>alpha-D-glucose 1-phosphate</name>
        <dbReference type="ChEBI" id="CHEBI:58601"/>
    </ligand>
</feature>
<feature type="binding site" evidence="1">
    <location>
        <begin position="188"/>
        <end position="189"/>
    </location>
    <ligand>
        <name>alpha-D-glucose 1-phosphate</name>
        <dbReference type="ChEBI" id="CHEBI:58601"/>
    </ligand>
</feature>
<feature type="binding site" evidence="1">
    <location>
        <position position="207"/>
    </location>
    <ligand>
        <name>alpha-D-glucose 1-phosphate</name>
        <dbReference type="ChEBI" id="CHEBI:58601"/>
    </ligand>
</feature>
<comment type="function">
    <text evidence="1">Involved in the biosynthesis of ADP-glucose, a building block required for the elongation reactions to produce glycogen. Catalyzes the reaction between ATP and alpha-D-glucose 1-phosphate (G1P) to produce pyrophosphate and ADP-Glc.</text>
</comment>
<comment type="catalytic activity">
    <reaction evidence="1">
        <text>alpha-D-glucose 1-phosphate + ATP + H(+) = ADP-alpha-D-glucose + diphosphate</text>
        <dbReference type="Rhea" id="RHEA:12120"/>
        <dbReference type="ChEBI" id="CHEBI:15378"/>
        <dbReference type="ChEBI" id="CHEBI:30616"/>
        <dbReference type="ChEBI" id="CHEBI:33019"/>
        <dbReference type="ChEBI" id="CHEBI:57498"/>
        <dbReference type="ChEBI" id="CHEBI:58601"/>
        <dbReference type="EC" id="2.7.7.27"/>
    </reaction>
</comment>
<comment type="pathway">
    <text evidence="1">Glycan biosynthesis; glycogen biosynthesis.</text>
</comment>
<comment type="subunit">
    <text evidence="1">Homotetramer.</text>
</comment>
<comment type="similarity">
    <text evidence="1">Belongs to the bacterial/plant glucose-1-phosphate adenylyltransferase family.</text>
</comment>
<evidence type="ECO:0000255" key="1">
    <source>
        <dbReference type="HAMAP-Rule" id="MF_00624"/>
    </source>
</evidence>
<dbReference type="EC" id="2.7.7.27" evidence="1"/>
<dbReference type="EMBL" id="CP000803">
    <property type="protein sequence ID" value="ABU60987.1"/>
    <property type="molecule type" value="Genomic_DNA"/>
</dbReference>
<dbReference type="RefSeq" id="WP_003033234.1">
    <property type="nucleotide sequence ID" value="NC_009749.1"/>
</dbReference>
<dbReference type="SMR" id="A7NAI4"/>
<dbReference type="KEGG" id="fta:FTA_0511"/>
<dbReference type="HOGENOM" id="CLU_029499_14_1_6"/>
<dbReference type="UniPathway" id="UPA00164"/>
<dbReference type="GO" id="GO:0005524">
    <property type="term" value="F:ATP binding"/>
    <property type="evidence" value="ECO:0007669"/>
    <property type="project" value="UniProtKB-KW"/>
</dbReference>
<dbReference type="GO" id="GO:0008878">
    <property type="term" value="F:glucose-1-phosphate adenylyltransferase activity"/>
    <property type="evidence" value="ECO:0007669"/>
    <property type="project" value="UniProtKB-UniRule"/>
</dbReference>
<dbReference type="GO" id="GO:0005978">
    <property type="term" value="P:glycogen biosynthetic process"/>
    <property type="evidence" value="ECO:0007669"/>
    <property type="project" value="UniProtKB-UniRule"/>
</dbReference>
<dbReference type="CDD" id="cd02508">
    <property type="entry name" value="ADP_Glucose_PP"/>
    <property type="match status" value="1"/>
</dbReference>
<dbReference type="CDD" id="cd04651">
    <property type="entry name" value="LbH_G1P_AT_C"/>
    <property type="match status" value="1"/>
</dbReference>
<dbReference type="Gene3D" id="2.160.10.10">
    <property type="entry name" value="Hexapeptide repeat proteins"/>
    <property type="match status" value="1"/>
</dbReference>
<dbReference type="Gene3D" id="3.90.550.10">
    <property type="entry name" value="Spore Coat Polysaccharide Biosynthesis Protein SpsA, Chain A"/>
    <property type="match status" value="1"/>
</dbReference>
<dbReference type="HAMAP" id="MF_00624">
    <property type="entry name" value="GlgC"/>
    <property type="match status" value="1"/>
</dbReference>
<dbReference type="InterPro" id="IPR011831">
    <property type="entry name" value="ADP-Glc_PPase"/>
</dbReference>
<dbReference type="InterPro" id="IPR005836">
    <property type="entry name" value="ADP_Glu_pyroP_CS"/>
</dbReference>
<dbReference type="InterPro" id="IPR023049">
    <property type="entry name" value="GlgC_bac"/>
</dbReference>
<dbReference type="InterPro" id="IPR056818">
    <property type="entry name" value="GlmU/GlgC-like_hexapep"/>
</dbReference>
<dbReference type="InterPro" id="IPR005835">
    <property type="entry name" value="NTP_transferase_dom"/>
</dbReference>
<dbReference type="InterPro" id="IPR029044">
    <property type="entry name" value="Nucleotide-diphossugar_trans"/>
</dbReference>
<dbReference type="InterPro" id="IPR011004">
    <property type="entry name" value="Trimer_LpxA-like_sf"/>
</dbReference>
<dbReference type="NCBIfam" id="TIGR02091">
    <property type="entry name" value="glgC"/>
    <property type="match status" value="1"/>
</dbReference>
<dbReference type="NCBIfam" id="NF001947">
    <property type="entry name" value="PRK00725.1"/>
    <property type="match status" value="1"/>
</dbReference>
<dbReference type="NCBIfam" id="NF002023">
    <property type="entry name" value="PRK00844.1"/>
    <property type="match status" value="1"/>
</dbReference>
<dbReference type="PANTHER" id="PTHR43523:SF2">
    <property type="entry name" value="GLUCOSE-1-PHOSPHATE ADENYLYLTRANSFERASE"/>
    <property type="match status" value="1"/>
</dbReference>
<dbReference type="PANTHER" id="PTHR43523">
    <property type="entry name" value="GLUCOSE-1-PHOSPHATE ADENYLYLTRANSFERASE-RELATED"/>
    <property type="match status" value="1"/>
</dbReference>
<dbReference type="Pfam" id="PF24894">
    <property type="entry name" value="Hexapep_GlmU"/>
    <property type="match status" value="1"/>
</dbReference>
<dbReference type="Pfam" id="PF00483">
    <property type="entry name" value="NTP_transferase"/>
    <property type="match status" value="1"/>
</dbReference>
<dbReference type="SUPFAM" id="SSF53448">
    <property type="entry name" value="Nucleotide-diphospho-sugar transferases"/>
    <property type="match status" value="1"/>
</dbReference>
<dbReference type="SUPFAM" id="SSF51161">
    <property type="entry name" value="Trimeric LpxA-like enzymes"/>
    <property type="match status" value="1"/>
</dbReference>
<dbReference type="PROSITE" id="PS00808">
    <property type="entry name" value="ADP_GLC_PYROPHOSPH_1"/>
    <property type="match status" value="1"/>
</dbReference>
<dbReference type="PROSITE" id="PS00809">
    <property type="entry name" value="ADP_GLC_PYROPHOSPH_2"/>
    <property type="match status" value="1"/>
</dbReference>
<dbReference type="PROSITE" id="PS00810">
    <property type="entry name" value="ADP_GLC_PYROPHOSPH_3"/>
    <property type="match status" value="1"/>
</dbReference>
<gene>
    <name evidence="1" type="primary">glgC</name>
    <name type="ordered locus">FTA_0511</name>
</gene>
<organism>
    <name type="scientific">Francisella tularensis subsp. holarctica (strain FTNF002-00 / FTA)</name>
    <dbReference type="NCBI Taxonomy" id="458234"/>
    <lineage>
        <taxon>Bacteria</taxon>
        <taxon>Pseudomonadati</taxon>
        <taxon>Pseudomonadota</taxon>
        <taxon>Gammaproteobacteria</taxon>
        <taxon>Thiotrichales</taxon>
        <taxon>Francisellaceae</taxon>
        <taxon>Francisella</taxon>
    </lineage>
</organism>
<sequence length="423" mass="47540">MDNHNSSHQLYKKAMALVLAGGRGSRLYNLTDTRAKPAVYFGGKFRIIDFALSNCLNSGIRRIGVVTQYKSHSLLRHLQRGWGFLRGELNEFIDLLPAQQRVDEEHWYRGTADAVYQNIDILRSYGPEYVIVLAGDHIYKMDYSIMLRDHAQSGYKCTVGCVEIAKEEAYAFGIMGIDENRKITSFIEKPKKNAPTIPGTTDRCYASMGIYIFNSDYLYDLLEEDITNKESSHDFGKDIIPRVVSENQALAHPFSMSCVPRGEGIEPYWRDVGTIDAFWEANLDLAANMPELNIYDKDWPVWTAQEQLPPAKFVPDRNGNHGVITNTLASGGCIVLGSEISKSLMFSKVRVLAGCKIDQCVIMPEVVVGENCRLKKVVIDKGCDIPAGMVIGEDPIEDAKNFYRTDKGVVLVTKKMIDELKEK</sequence>
<reference key="1">
    <citation type="journal article" date="2009" name="PLoS ONE">
        <title>Complete genome sequence of Francisella tularensis subspecies holarctica FTNF002-00.</title>
        <authorList>
            <person name="Barabote R.D."/>
            <person name="Xie G."/>
            <person name="Brettin T.S."/>
            <person name="Hinrichs S.H."/>
            <person name="Fey P.D."/>
            <person name="Jay J.J."/>
            <person name="Engle J.L."/>
            <person name="Godbole S.D."/>
            <person name="Noronha J.M."/>
            <person name="Scheuermann R.H."/>
            <person name="Zhou L.W."/>
            <person name="Lion C."/>
            <person name="Dempsey M.P."/>
        </authorList>
    </citation>
    <scope>NUCLEOTIDE SEQUENCE [LARGE SCALE GENOMIC DNA]</scope>
    <source>
        <strain>FTNF002-00 / FTA</strain>
    </source>
</reference>